<name>SF01_MOUSE</name>
<dbReference type="EMBL" id="X80159">
    <property type="protein sequence ID" value="CAA56440.1"/>
    <property type="molecule type" value="mRNA"/>
</dbReference>
<dbReference type="EMBL" id="X85802">
    <property type="protein sequence ID" value="CAA59797.1"/>
    <property type="molecule type" value="mRNA"/>
</dbReference>
<dbReference type="EMBL" id="Y08907">
    <property type="protein sequence ID" value="CAA70113.1"/>
    <property type="molecule type" value="Genomic_DNA"/>
</dbReference>
<dbReference type="EMBL" id="Y12838">
    <property type="protein sequence ID" value="CAA73359.1"/>
    <property type="molecule type" value="Genomic_DNA"/>
</dbReference>
<dbReference type="EMBL" id="AC127556">
    <property type="status" value="NOT_ANNOTATED_CDS"/>
    <property type="molecule type" value="Genomic_DNA"/>
</dbReference>
<dbReference type="EMBL" id="AC167245">
    <property type="status" value="NOT_ANNOTATED_CDS"/>
    <property type="molecule type" value="Genomic_DNA"/>
</dbReference>
<dbReference type="EMBL" id="BC009091">
    <property type="protein sequence ID" value="AAH09091.1"/>
    <property type="molecule type" value="mRNA"/>
</dbReference>
<dbReference type="EMBL" id="BC055370">
    <property type="protein sequence ID" value="AAH55370.1"/>
    <property type="molecule type" value="mRNA"/>
</dbReference>
<dbReference type="CCDS" id="CCDS50368.1">
    <molecule id="Q64213-3"/>
</dbReference>
<dbReference type="CCDS" id="CCDS50369.1">
    <molecule id="Q64213-2"/>
</dbReference>
<dbReference type="RefSeq" id="NP_001104261.1">
    <molecule id="Q64213-3"/>
    <property type="nucleotide sequence ID" value="NM_001110791.2"/>
</dbReference>
<dbReference type="BMRB" id="Q64213"/>
<dbReference type="SMR" id="Q64213"/>
<dbReference type="ComplexPortal" id="CPX-5861">
    <property type="entry name" value="SF1-U2AF65 splicing factor complex"/>
</dbReference>
<dbReference type="DIP" id="DIP-60453N"/>
<dbReference type="ELM" id="Q64213"/>
<dbReference type="FunCoup" id="Q64213">
    <property type="interactions" value="5255"/>
</dbReference>
<dbReference type="IntAct" id="Q64213">
    <property type="interactions" value="2"/>
</dbReference>
<dbReference type="STRING" id="10090.ENSMUSP00000121309"/>
<dbReference type="GlyGen" id="Q64213">
    <property type="glycosylation" value="6 sites, 1 O-linked glycan (6 sites)"/>
</dbReference>
<dbReference type="iPTMnet" id="Q64213"/>
<dbReference type="PhosphoSitePlus" id="Q64213"/>
<dbReference type="SwissPalm" id="Q64213"/>
<dbReference type="jPOST" id="Q64213"/>
<dbReference type="PaxDb" id="10090-ENSMUSP00000121309"/>
<dbReference type="PeptideAtlas" id="Q64213"/>
<dbReference type="ProteomicsDB" id="261501">
    <molecule id="Q64213-1"/>
</dbReference>
<dbReference type="ProteomicsDB" id="261502">
    <molecule id="Q64213-2"/>
</dbReference>
<dbReference type="ProteomicsDB" id="261503">
    <molecule id="Q64213-3"/>
</dbReference>
<dbReference type="Pumba" id="Q64213"/>
<dbReference type="Antibodypedia" id="15586">
    <property type="antibodies" value="421 antibodies from 32 providers"/>
</dbReference>
<dbReference type="Ensembl" id="ENSMUST00000131252.8">
    <molecule id="Q64213-3"/>
    <property type="protein sequence ID" value="ENSMUSP00000121309.2"/>
    <property type="gene ID" value="ENSMUSG00000024949.18"/>
</dbReference>
<dbReference type="AGR" id="MGI:1095403"/>
<dbReference type="MGI" id="MGI:1095403">
    <property type="gene designation" value="Sf1"/>
</dbReference>
<dbReference type="VEuPathDB" id="HostDB:ENSMUSG00000024949"/>
<dbReference type="eggNOG" id="KOG0119">
    <property type="taxonomic scope" value="Eukaryota"/>
</dbReference>
<dbReference type="GeneTree" id="ENSGT00940000157258"/>
<dbReference type="InParanoid" id="Q64213"/>
<dbReference type="OMA" id="PGMPSMY"/>
<dbReference type="TreeFam" id="TF319159"/>
<dbReference type="Reactome" id="R-MMU-72163">
    <property type="pathway name" value="mRNA Splicing - Major Pathway"/>
</dbReference>
<dbReference type="ChiTaRS" id="Sf1">
    <property type="organism name" value="mouse"/>
</dbReference>
<dbReference type="PRO" id="PR:Q64213"/>
<dbReference type="Proteomes" id="UP000000589">
    <property type="component" value="Chromosome 19"/>
</dbReference>
<dbReference type="RNAct" id="Q64213">
    <property type="molecule type" value="protein"/>
</dbReference>
<dbReference type="Bgee" id="ENSMUSG00000024949">
    <property type="expression patterns" value="Expressed in retinal neural layer and 88 other cell types or tissues"/>
</dbReference>
<dbReference type="ExpressionAtlas" id="Q64213">
    <property type="expression patterns" value="baseline and differential"/>
</dbReference>
<dbReference type="GO" id="GO:0005737">
    <property type="term" value="C:cytoplasm"/>
    <property type="evidence" value="ECO:0000250"/>
    <property type="project" value="MGI"/>
</dbReference>
<dbReference type="GO" id="GO:0016604">
    <property type="term" value="C:nuclear body"/>
    <property type="evidence" value="ECO:0000314"/>
    <property type="project" value="MGI"/>
</dbReference>
<dbReference type="GO" id="GO:0005634">
    <property type="term" value="C:nucleus"/>
    <property type="evidence" value="ECO:0000250"/>
    <property type="project" value="MGI"/>
</dbReference>
<dbReference type="GO" id="GO:0005681">
    <property type="term" value="C:spliceosomal complex"/>
    <property type="evidence" value="ECO:0000266"/>
    <property type="project" value="ComplexPortal"/>
</dbReference>
<dbReference type="GO" id="GO:0089701">
    <property type="term" value="C:U2AF complex"/>
    <property type="evidence" value="ECO:0000266"/>
    <property type="project" value="ComplexPortal"/>
</dbReference>
<dbReference type="GO" id="GO:0003723">
    <property type="term" value="F:RNA binding"/>
    <property type="evidence" value="ECO:0000353"/>
    <property type="project" value="MGI"/>
</dbReference>
<dbReference type="GO" id="GO:0008270">
    <property type="term" value="F:zinc ion binding"/>
    <property type="evidence" value="ECO:0007669"/>
    <property type="project" value="UniProtKB-KW"/>
</dbReference>
<dbReference type="GO" id="GO:0033327">
    <property type="term" value="P:Leydig cell differentiation"/>
    <property type="evidence" value="ECO:0000316"/>
    <property type="project" value="MGI"/>
</dbReference>
<dbReference type="GO" id="GO:0030238">
    <property type="term" value="P:male sex determination"/>
    <property type="evidence" value="ECO:0000316"/>
    <property type="project" value="MGI"/>
</dbReference>
<dbReference type="GO" id="GO:0000398">
    <property type="term" value="P:mRNA splicing, via spliceosome"/>
    <property type="evidence" value="ECO:0000303"/>
    <property type="project" value="ComplexPortal"/>
</dbReference>
<dbReference type="GO" id="GO:0030575">
    <property type="term" value="P:nuclear body organization"/>
    <property type="evidence" value="ECO:0000315"/>
    <property type="project" value="MGI"/>
</dbReference>
<dbReference type="GO" id="GO:0050810">
    <property type="term" value="P:regulation of steroid biosynthetic process"/>
    <property type="evidence" value="ECO:0000316"/>
    <property type="project" value="MGI"/>
</dbReference>
<dbReference type="CDD" id="cd22382">
    <property type="entry name" value="KH-I_SF1"/>
    <property type="match status" value="1"/>
</dbReference>
<dbReference type="FunFam" id="3.30.1370.10:FF:000016">
    <property type="entry name" value="Putative splicing factor 1"/>
    <property type="match status" value="1"/>
</dbReference>
<dbReference type="Gene3D" id="6.10.140.1790">
    <property type="match status" value="1"/>
</dbReference>
<dbReference type="Gene3D" id="3.30.1370.10">
    <property type="entry name" value="K Homology domain, type 1"/>
    <property type="match status" value="1"/>
</dbReference>
<dbReference type="InterPro" id="IPR045071">
    <property type="entry name" value="BBP-like"/>
</dbReference>
<dbReference type="InterPro" id="IPR055256">
    <property type="entry name" value="KH_1_KHDC4/BBP-like"/>
</dbReference>
<dbReference type="InterPro" id="IPR004087">
    <property type="entry name" value="KH_dom"/>
</dbReference>
<dbReference type="InterPro" id="IPR036612">
    <property type="entry name" value="KH_dom_type_1_sf"/>
</dbReference>
<dbReference type="InterPro" id="IPR032570">
    <property type="entry name" value="SF1-HH"/>
</dbReference>
<dbReference type="InterPro" id="IPR047086">
    <property type="entry name" value="SF1-HH_sf"/>
</dbReference>
<dbReference type="InterPro" id="IPR001878">
    <property type="entry name" value="Znf_CCHC"/>
</dbReference>
<dbReference type="PANTHER" id="PTHR11208">
    <property type="entry name" value="RNA-BINDING PROTEIN RELATED"/>
    <property type="match status" value="1"/>
</dbReference>
<dbReference type="PANTHER" id="PTHR11208:SF45">
    <property type="entry name" value="SPLICING FACTOR 1"/>
    <property type="match status" value="1"/>
</dbReference>
<dbReference type="Pfam" id="PF22675">
    <property type="entry name" value="KH-I_KHDC4-BBP"/>
    <property type="match status" value="1"/>
</dbReference>
<dbReference type="Pfam" id="PF16275">
    <property type="entry name" value="SF1-HH"/>
    <property type="match status" value="1"/>
</dbReference>
<dbReference type="Pfam" id="PF00098">
    <property type="entry name" value="zf-CCHC"/>
    <property type="match status" value="1"/>
</dbReference>
<dbReference type="SMART" id="SM00322">
    <property type="entry name" value="KH"/>
    <property type="match status" value="1"/>
</dbReference>
<dbReference type="SMART" id="SM00343">
    <property type="entry name" value="ZnF_C2HC"/>
    <property type="match status" value="1"/>
</dbReference>
<dbReference type="SUPFAM" id="SSF54791">
    <property type="entry name" value="Eukaryotic type KH-domain (KH-domain type I)"/>
    <property type="match status" value="1"/>
</dbReference>
<dbReference type="PROSITE" id="PS50084">
    <property type="entry name" value="KH_TYPE_1"/>
    <property type="match status" value="1"/>
</dbReference>
<dbReference type="PROSITE" id="PS50158">
    <property type="entry name" value="ZF_CCHC"/>
    <property type="match status" value="1"/>
</dbReference>
<proteinExistence type="evidence at protein level"/>
<protein>
    <recommendedName>
        <fullName>Splicing factor 1</fullName>
    </recommendedName>
    <alternativeName>
        <fullName>CW17</fullName>
    </alternativeName>
    <alternativeName>
        <fullName>Mammalian branch point-binding protein</fullName>
        <shortName>BBP</shortName>
        <shortName>mBBP</shortName>
    </alternativeName>
    <alternativeName>
        <fullName>Transcription factor ZFM1</fullName>
        <shortName>mZFM</shortName>
    </alternativeName>
    <alternativeName>
        <fullName>Zinc finger gene in MEN1 locus</fullName>
    </alternativeName>
    <alternativeName>
        <fullName>Zinc finger protein 162</fullName>
    </alternativeName>
</protein>
<feature type="initiator methionine" description="Removed" evidence="2">
    <location>
        <position position="1"/>
    </location>
</feature>
<feature type="chain" id="PRO_0000050130" description="Splicing factor 1">
    <location>
        <begin position="2"/>
        <end position="653"/>
    </location>
</feature>
<feature type="domain" description="KH" evidence="5">
    <location>
        <begin position="141"/>
        <end position="222"/>
    </location>
</feature>
<feature type="zinc finger region" description="CCHC-type" evidence="4">
    <location>
        <begin position="277"/>
        <end position="296"/>
    </location>
</feature>
<feature type="region of interest" description="Disordered" evidence="6">
    <location>
        <begin position="1"/>
        <end position="44"/>
    </location>
</feature>
<feature type="region of interest" description="Disordered" evidence="6">
    <location>
        <begin position="65"/>
        <end position="94"/>
    </location>
</feature>
<feature type="region of interest" description="Disordered" evidence="6">
    <location>
        <begin position="325"/>
        <end position="584"/>
    </location>
</feature>
<feature type="region of interest" description="Disordered" evidence="6">
    <location>
        <begin position="611"/>
        <end position="653"/>
    </location>
</feature>
<feature type="short sequence motif" description="Nuclear localization signal" evidence="3">
    <location>
        <begin position="15"/>
        <end position="19"/>
    </location>
</feature>
<feature type="compositionally biased region" description="Low complexity" evidence="6">
    <location>
        <begin position="335"/>
        <end position="350"/>
    </location>
</feature>
<feature type="compositionally biased region" description="Gly residues" evidence="6">
    <location>
        <begin position="382"/>
        <end position="394"/>
    </location>
</feature>
<feature type="compositionally biased region" description="Pro residues" evidence="6">
    <location>
        <begin position="418"/>
        <end position="447"/>
    </location>
</feature>
<feature type="compositionally biased region" description="Pro residues" evidence="6">
    <location>
        <begin position="470"/>
        <end position="499"/>
    </location>
</feature>
<feature type="compositionally biased region" description="Low complexity" evidence="6">
    <location>
        <begin position="515"/>
        <end position="534"/>
    </location>
</feature>
<feature type="compositionally biased region" description="Pro residues" evidence="6">
    <location>
        <begin position="567"/>
        <end position="584"/>
    </location>
</feature>
<feature type="modified residue" description="N-acetylalanine" evidence="2">
    <location>
        <position position="2"/>
    </location>
</feature>
<feature type="modified residue" description="Phosphoserine" evidence="2">
    <location>
        <position position="14"/>
    </location>
</feature>
<feature type="modified residue" description="Phosphoserine; by PKG" evidence="2">
    <location>
        <position position="20"/>
    </location>
</feature>
<feature type="modified residue" description="Phosphoserine" evidence="10 11 12 13">
    <location>
        <position position="80"/>
    </location>
</feature>
<feature type="modified residue" description="Phosphoserine" evidence="10 11 12 13">
    <location>
        <position position="82"/>
    </location>
</feature>
<feature type="modified residue" description="Phosphotyrosine" evidence="12 13">
    <location>
        <position position="87"/>
    </location>
</feature>
<feature type="modified residue" description="Phosphoserine" evidence="2">
    <location>
        <position position="89"/>
    </location>
</feature>
<feature type="splice variant" id="VSP_050424" description="In isoform CW17E." evidence="7 8">
    <original>TTTTTTSAGTGSIPPWQQQQAAAAASPGTPQMQGNPTMVPLPPGVQPPLPPGAPPPPPCSIECLLCLLSSPNSLCLSPNRAARIPPRGSDGPSHESEDFPRPLVTLPGRQPQQRPWWTGWFGKAA</original>
    <variation>SLPAAAMARAMRVRTFRAHW</variation>
    <location>
        <begin position="529"/>
        <end position="653"/>
    </location>
</feature>
<feature type="splice variant" id="VSP_008840" description="In isoform 3." evidence="7">
    <original>PCSIECLLCLLSSPNSLCLSPNRAARIPPRGSDGPSHESEDFPRPLVTLPGRQPQQRPWWTGWFGKAA</original>
    <variation>PPPPPGSAGMMYAPPPPPPPPMDPSNFVTMMGMGVAGMPPFGMPPAPPPPPPQN</variation>
    <location>
        <begin position="586"/>
        <end position="653"/>
    </location>
</feature>
<feature type="sequence conflict" description="In Ref. 1; CAA59797 and 2; CAA73359." evidence="9" ref="1 2">
    <original>K</original>
    <variation>E</variation>
    <location>
        <position position="184"/>
    </location>
</feature>
<feature type="sequence conflict" description="In Ref. 4; AAH55370." evidence="9" ref="4">
    <original>P</original>
    <variation>S</variation>
    <location>
        <position position="509"/>
    </location>
</feature>
<feature type="sequence conflict" description="In Ref. 4; AAH09091." evidence="9" ref="4">
    <original>P</original>
    <variation>L</variation>
    <location>
        <position position="524"/>
    </location>
</feature>
<feature type="sequence conflict" description="In Ref. 2; CAA73359/CAA70113." evidence="9" ref="2">
    <original>P</original>
    <variation>T</variation>
    <location>
        <position position="586"/>
    </location>
</feature>
<gene>
    <name type="primary">Sf1</name>
    <name type="synonym">Zfm1</name>
    <name type="synonym">Zfp162</name>
</gene>
<sequence>MATGANATPLDFPSKKRKRSRWNQDTMEQKTVIPGMPTVIPPGLTREQERAYIVQLQIEDLTRKLRTGDLGIPPNPEDRSPSPEPIYNSEGKRLNTREFRTRKKLEEERHTLITEMVALNPDFKPPADYKPPATRVSDKVMIPQDEYPEINFVGLLIGPRGNTLKNIEKECNAKIMIRGKGSVKEGKVGRKDGQMLPGEDEPLHALVTANTMENVKKAVEQIRNILKQGIETPEDQNDLRKMQLRELARLNGTLREDDNRILRPWQSSETRSITNTTVCTKCGGAGHIASDCKFQRPGDPQSAQDKARMDKEYLSLMAELGEAPVPASVGSTSGPATTPLASAPRPAAPASNPPPPSLMSTTQSRPPWMNSGPSENRPYHGMHGGGPGGPGGGPHSFPHPLPSLTGGHGGHPMQHNPNGPPPPWMQPPPPPMNQGPHPPGHHGPPPMDQYLGSTPVGSGVYRLHQGKGMMPPPPMGMMPPPPPPPSGQPPPPPSGPLPPWQQQQQQPPPPPPPSSSMASSTPLPWQQNTTTTTTSAGTGSIPPWQQQQAAAAASPGTPQMQGNPTMVPLPPGVQPPLPPGAPPPPPCSIECLLCLLSSPNSLCLSPNRAARIPPRGSDGPSHESEDFPRPLVTLPGRQPQQRPWWTGWFGKAA</sequence>
<accession>Q64213</accession>
<accession>E9QK02</accession>
<accession>O08817</accession>
<accession>P70167</accession>
<accession>Q61454</accession>
<accession>Q921Z4</accession>
<comment type="function">
    <text evidence="1">Necessary for the ATP-dependent first step of spliceosome assembly. Binds to the intron branch point sequence (BPS) 5'-UACUAAC-3' of the pre-mRNA. May act as transcription repressor (By similarity).</text>
</comment>
<comment type="subunit">
    <text evidence="1">Binds U2AF2. Interacts with U1 snRNA. Interacts with RBM17. Binds EWSR1, FUS and TAF15 (By similarity).</text>
</comment>
<comment type="subcellular location">
    <subcellularLocation>
        <location>Nucleus</location>
    </subcellularLocation>
</comment>
<comment type="alternative products">
    <event type="alternative splicing"/>
    <isoform>
        <id>Q64213-1</id>
        <name>CW17</name>
        <sequence type="displayed"/>
    </isoform>
    <isoform>
        <id>Q64213-2</id>
        <name>CW17E</name>
        <sequence type="described" ref="VSP_050424"/>
    </isoform>
    <isoform>
        <id>Q64213-3</id>
        <name>3</name>
        <sequence type="described" ref="VSP_008840"/>
    </isoform>
</comment>
<comment type="tissue specificity">
    <text>Detected at intermediate levels in spleen. Lower levels in heart, kidney, brain, liver, testis, bone marrow, adrenal gland, lymph nodes, pancreas and thymus.</text>
</comment>
<comment type="PTM">
    <text evidence="1">Phosphorylation on Ser-20 interferes with U2AF2 binding and spliceosome assembly.</text>
</comment>
<comment type="similarity">
    <text evidence="9">Belongs to the BBP/SF1 family.</text>
</comment>
<organism>
    <name type="scientific">Mus musculus</name>
    <name type="common">Mouse</name>
    <dbReference type="NCBI Taxonomy" id="10090"/>
    <lineage>
        <taxon>Eukaryota</taxon>
        <taxon>Metazoa</taxon>
        <taxon>Chordata</taxon>
        <taxon>Craniata</taxon>
        <taxon>Vertebrata</taxon>
        <taxon>Euteleostomi</taxon>
        <taxon>Mammalia</taxon>
        <taxon>Eutheria</taxon>
        <taxon>Euarchontoglires</taxon>
        <taxon>Glires</taxon>
        <taxon>Rodentia</taxon>
        <taxon>Myomorpha</taxon>
        <taxon>Muroidea</taxon>
        <taxon>Muridae</taxon>
        <taxon>Murinae</taxon>
        <taxon>Mus</taxon>
        <taxon>Mus</taxon>
    </lineage>
</organism>
<reference key="1">
    <citation type="journal article" date="1997" name="DNA Cell Biol.">
        <title>Enhanced expression in spleen macrophages of the mouse homolog to the human putative tumor suppressor gene ZFM1.</title>
        <authorList>
            <person name="Wrehlke C."/>
            <person name="Schmitt-Wrede H.-P."/>
            <person name="Qiao Z.D."/>
            <person name="Wunderlich F."/>
        </authorList>
    </citation>
    <scope>NUCLEOTIDE SEQUENCE [GENOMIC DNA / MRNA] (ISOFORMS CW17 AND CW17E)</scope>
    <source>
        <strain>C57BL/10</strain>
        <tissue>Spleen</tissue>
    </source>
</reference>
<reference key="2">
    <citation type="journal article" date="1999" name="DNA Cell Biol.">
        <title>Genomic organization of mouse gene zfp162 (mzfm).</title>
        <authorList>
            <person name="Wrehlke C."/>
            <person name="Wiedemeyer W.-R."/>
            <person name="Schmitt-Wrede H.-P."/>
            <person name="Mincheva A."/>
            <person name="Lichter P."/>
            <person name="Wunderlich F."/>
        </authorList>
    </citation>
    <scope>NUCLEOTIDE SEQUENCE [GENOMIC DNA]</scope>
    <source>
        <strain>C57B1/10</strain>
    </source>
</reference>
<reference key="3">
    <citation type="journal article" date="2009" name="PLoS Biol.">
        <title>Lineage-specific biology revealed by a finished genome assembly of the mouse.</title>
        <authorList>
            <person name="Church D.M."/>
            <person name="Goodstadt L."/>
            <person name="Hillier L.W."/>
            <person name="Zody M.C."/>
            <person name="Goldstein S."/>
            <person name="She X."/>
            <person name="Bult C.J."/>
            <person name="Agarwala R."/>
            <person name="Cherry J.L."/>
            <person name="DiCuccio M."/>
            <person name="Hlavina W."/>
            <person name="Kapustin Y."/>
            <person name="Meric P."/>
            <person name="Maglott D."/>
            <person name="Birtle Z."/>
            <person name="Marques A.C."/>
            <person name="Graves T."/>
            <person name="Zhou S."/>
            <person name="Teague B."/>
            <person name="Potamousis K."/>
            <person name="Churas C."/>
            <person name="Place M."/>
            <person name="Herschleb J."/>
            <person name="Runnheim R."/>
            <person name="Forrest D."/>
            <person name="Amos-Landgraf J."/>
            <person name="Schwartz D.C."/>
            <person name="Cheng Z."/>
            <person name="Lindblad-Toh K."/>
            <person name="Eichler E.E."/>
            <person name="Ponting C.P."/>
        </authorList>
    </citation>
    <scope>NUCLEOTIDE SEQUENCE [LARGE SCALE GENOMIC DNA]</scope>
    <source>
        <strain>C57BL/6J</strain>
    </source>
</reference>
<reference key="4">
    <citation type="journal article" date="2004" name="Genome Res.">
        <title>The status, quality, and expansion of the NIH full-length cDNA project: the Mammalian Gene Collection (MGC).</title>
        <authorList>
            <consortium name="The MGC Project Team"/>
        </authorList>
    </citation>
    <scope>NUCLEOTIDE SEQUENCE [LARGE SCALE MRNA] (ISOFORMS CW17E AND 3)</scope>
    <source>
        <strain>C3H/He</strain>
        <tissue>Mammary tumor</tissue>
        <tissue>Osteoblast</tissue>
    </source>
</reference>
<reference key="5">
    <citation type="journal article" date="2007" name="Proc. Natl. Acad. Sci. U.S.A.">
        <title>Large-scale phosphorylation analysis of mouse liver.</title>
        <authorList>
            <person name="Villen J."/>
            <person name="Beausoleil S.A."/>
            <person name="Gerber S.A."/>
            <person name="Gygi S.P."/>
        </authorList>
    </citation>
    <scope>PHOSPHORYLATION [LARGE SCALE ANALYSIS] AT SER-80 AND SER-82</scope>
    <scope>IDENTIFICATION BY MASS SPECTROMETRY [LARGE SCALE ANALYSIS]</scope>
    <source>
        <tissue>Liver</tissue>
    </source>
</reference>
<reference key="6">
    <citation type="journal article" date="2009" name="Immunity">
        <title>The phagosomal proteome in interferon-gamma-activated macrophages.</title>
        <authorList>
            <person name="Trost M."/>
            <person name="English L."/>
            <person name="Lemieux S."/>
            <person name="Courcelles M."/>
            <person name="Desjardins M."/>
            <person name="Thibault P."/>
        </authorList>
    </citation>
    <scope>PHOSPHORYLATION [LARGE SCALE ANALYSIS] AT SER-80; SER-82 AND TYR-87</scope>
    <scope>IDENTIFICATION BY MASS SPECTROMETRY [LARGE SCALE ANALYSIS]</scope>
</reference>
<reference key="7">
    <citation type="journal article" date="2009" name="Mol. Cell. Proteomics">
        <title>Large scale localization of protein phosphorylation by use of electron capture dissociation mass spectrometry.</title>
        <authorList>
            <person name="Sweet S.M."/>
            <person name="Bailey C.M."/>
            <person name="Cunningham D.L."/>
            <person name="Heath J.K."/>
            <person name="Cooper H.J."/>
        </authorList>
    </citation>
    <scope>PHOSPHORYLATION [LARGE SCALE ANALYSIS] AT SER-80 AND SER-82</scope>
    <scope>IDENTIFICATION BY MASS SPECTROMETRY [LARGE SCALE ANALYSIS]</scope>
    <source>
        <tissue>Embryonic fibroblast</tissue>
    </source>
</reference>
<reference key="8">
    <citation type="journal article" date="2010" name="Cell">
        <title>A tissue-specific atlas of mouse protein phosphorylation and expression.</title>
        <authorList>
            <person name="Huttlin E.L."/>
            <person name="Jedrychowski M.P."/>
            <person name="Elias J.E."/>
            <person name="Goswami T."/>
            <person name="Rad R."/>
            <person name="Beausoleil S.A."/>
            <person name="Villen J."/>
            <person name="Haas W."/>
            <person name="Sowa M.E."/>
            <person name="Gygi S.P."/>
        </authorList>
    </citation>
    <scope>PHOSPHORYLATION [LARGE SCALE ANALYSIS] AT SER-80; SER-82 AND TYR-87</scope>
    <scope>IDENTIFICATION BY MASS SPECTROMETRY [LARGE SCALE ANALYSIS]</scope>
    <source>
        <tissue>Brain</tissue>
        <tissue>Brown adipose tissue</tissue>
        <tissue>Heart</tissue>
        <tissue>Kidney</tissue>
        <tissue>Liver</tissue>
        <tissue>Lung</tissue>
        <tissue>Pancreas</tissue>
        <tissue>Spleen</tissue>
        <tissue>Testis</tissue>
    </source>
</reference>
<evidence type="ECO:0000250" key="1"/>
<evidence type="ECO:0000250" key="2">
    <source>
        <dbReference type="UniProtKB" id="Q15637"/>
    </source>
</evidence>
<evidence type="ECO:0000255" key="3"/>
<evidence type="ECO:0000255" key="4">
    <source>
        <dbReference type="PROSITE-ProRule" id="PRU00047"/>
    </source>
</evidence>
<evidence type="ECO:0000255" key="5">
    <source>
        <dbReference type="PROSITE-ProRule" id="PRU00117"/>
    </source>
</evidence>
<evidence type="ECO:0000256" key="6">
    <source>
        <dbReference type="SAM" id="MobiDB-lite"/>
    </source>
</evidence>
<evidence type="ECO:0000303" key="7">
    <source>
    </source>
</evidence>
<evidence type="ECO:0000303" key="8">
    <source>
    </source>
</evidence>
<evidence type="ECO:0000305" key="9"/>
<evidence type="ECO:0007744" key="10">
    <source>
    </source>
</evidence>
<evidence type="ECO:0007744" key="11">
    <source>
    </source>
</evidence>
<evidence type="ECO:0007744" key="12">
    <source>
    </source>
</evidence>
<evidence type="ECO:0007744" key="13">
    <source>
    </source>
</evidence>
<keyword id="KW-0007">Acetylation</keyword>
<keyword id="KW-0025">Alternative splicing</keyword>
<keyword id="KW-0479">Metal-binding</keyword>
<keyword id="KW-0507">mRNA processing</keyword>
<keyword id="KW-0508">mRNA splicing</keyword>
<keyword id="KW-0539">Nucleus</keyword>
<keyword id="KW-0597">Phosphoprotein</keyword>
<keyword id="KW-1185">Reference proteome</keyword>
<keyword id="KW-0678">Repressor</keyword>
<keyword id="KW-0694">RNA-binding</keyword>
<keyword id="KW-0747">Spliceosome</keyword>
<keyword id="KW-0804">Transcription</keyword>
<keyword id="KW-0805">Transcription regulation</keyword>
<keyword id="KW-0862">Zinc</keyword>
<keyword id="KW-0863">Zinc-finger</keyword>